<evidence type="ECO:0000250" key="1"/>
<evidence type="ECO:0000305" key="2"/>
<keyword id="KW-0276">Fatty acid metabolism</keyword>
<keyword id="KW-0443">Lipid metabolism</keyword>
<keyword id="KW-0456">Lyase</keyword>
<keyword id="KW-1185">Reference proteome</keyword>
<name>ECHA6_MYCBO</name>
<gene>
    <name type="primary">echA6</name>
    <name type="ordered locus">BQ2027_MB0929</name>
</gene>
<protein>
    <recommendedName>
        <fullName>Probable enoyl-CoA hydratase echA6</fullName>
        <ecNumber>4.2.1.17</ecNumber>
    </recommendedName>
</protein>
<accession>P64015</accession>
<accession>A0A1R3XWS8</accession>
<accession>Q10533</accession>
<accession>X2BGD6</accession>
<reference key="1">
    <citation type="journal article" date="2003" name="Proc. Natl. Acad. Sci. U.S.A.">
        <title>The complete genome sequence of Mycobacterium bovis.</title>
        <authorList>
            <person name="Garnier T."/>
            <person name="Eiglmeier K."/>
            <person name="Camus J.-C."/>
            <person name="Medina N."/>
            <person name="Mansoor H."/>
            <person name="Pryor M."/>
            <person name="Duthoy S."/>
            <person name="Grondin S."/>
            <person name="Lacroix C."/>
            <person name="Monsempe C."/>
            <person name="Simon S."/>
            <person name="Harris B."/>
            <person name="Atkin R."/>
            <person name="Doggett J."/>
            <person name="Mayes R."/>
            <person name="Keating L."/>
            <person name="Wheeler P.R."/>
            <person name="Parkhill J."/>
            <person name="Barrell B.G."/>
            <person name="Cole S.T."/>
            <person name="Gordon S.V."/>
            <person name="Hewinson R.G."/>
        </authorList>
    </citation>
    <scope>NUCLEOTIDE SEQUENCE [LARGE SCALE GENOMIC DNA]</scope>
    <source>
        <strain>ATCC BAA-935 / AF2122/97</strain>
    </source>
</reference>
<reference key="2">
    <citation type="journal article" date="2017" name="Genome Announc.">
        <title>Updated reference genome sequence and annotation of Mycobacterium bovis AF2122/97.</title>
        <authorList>
            <person name="Malone K.M."/>
            <person name="Farrell D."/>
            <person name="Stuber T.P."/>
            <person name="Schubert O.T."/>
            <person name="Aebersold R."/>
            <person name="Robbe-Austerman S."/>
            <person name="Gordon S.V."/>
        </authorList>
    </citation>
    <scope>NUCLEOTIDE SEQUENCE [LARGE SCALE GENOMIC DNA]</scope>
    <scope>GENOME REANNOTATION</scope>
    <source>
        <strain>ATCC BAA-935 / AF2122/97</strain>
    </source>
</reference>
<sequence length="243" mass="26029">MIGITQAEAVLTIELQRPERRNALNSQLVEELTQAIRKAGDGSARAIVLTGQGTAFCAGADLSGDAFAADYPDRLIELHKAMDASPMPVVGAINGPAIGAGLQLAMQCDLRVVAPDAFFQFPTSKYGLALDNWSIRRLSSLVGHGRARAMLLSAEKLTAEIALHTGMANRIGTLADAQAWAAEIARLAPLAIQHAKRVLNDDGAIEEAWPAHKELFDKAWGSQDVIEAQVARMEKRPPKFQGA</sequence>
<dbReference type="EC" id="4.2.1.17"/>
<dbReference type="EMBL" id="LT708304">
    <property type="protein sequence ID" value="SIT99527.1"/>
    <property type="molecule type" value="Genomic_DNA"/>
</dbReference>
<dbReference type="RefSeq" id="NP_854586.1">
    <property type="nucleotide sequence ID" value="NC_002945.3"/>
</dbReference>
<dbReference type="RefSeq" id="WP_003404702.1">
    <property type="nucleotide sequence ID" value="NC_002945.4"/>
</dbReference>
<dbReference type="SMR" id="P64015"/>
<dbReference type="KEGG" id="mbo:BQ2027_MB0929"/>
<dbReference type="PATRIC" id="fig|233413.5.peg.1010"/>
<dbReference type="Proteomes" id="UP000001419">
    <property type="component" value="Chromosome"/>
</dbReference>
<dbReference type="GO" id="GO:0004300">
    <property type="term" value="F:enoyl-CoA hydratase activity"/>
    <property type="evidence" value="ECO:0007669"/>
    <property type="project" value="UniProtKB-EC"/>
</dbReference>
<dbReference type="GO" id="GO:0006635">
    <property type="term" value="P:fatty acid beta-oxidation"/>
    <property type="evidence" value="ECO:0007669"/>
    <property type="project" value="TreeGrafter"/>
</dbReference>
<dbReference type="CDD" id="cd06558">
    <property type="entry name" value="crotonase-like"/>
    <property type="match status" value="1"/>
</dbReference>
<dbReference type="FunFam" id="3.90.226.10:FF:000115">
    <property type="entry name" value="Probable enoyl-CoA hydratase echA6"/>
    <property type="match status" value="1"/>
</dbReference>
<dbReference type="Gene3D" id="3.90.226.10">
    <property type="entry name" value="2-enoyl-CoA Hydratase, Chain A, domain 1"/>
    <property type="match status" value="1"/>
</dbReference>
<dbReference type="InterPro" id="IPR029045">
    <property type="entry name" value="ClpP/crotonase-like_dom_sf"/>
</dbReference>
<dbReference type="InterPro" id="IPR018376">
    <property type="entry name" value="Enoyl-CoA_hyd/isom_CS"/>
</dbReference>
<dbReference type="InterPro" id="IPR001753">
    <property type="entry name" value="Enoyl-CoA_hydra/iso"/>
</dbReference>
<dbReference type="NCBIfam" id="NF005891">
    <property type="entry name" value="PRK07854.1"/>
    <property type="match status" value="1"/>
</dbReference>
<dbReference type="PANTHER" id="PTHR11941:SF169">
    <property type="entry name" value="(7AS)-7A-METHYL-1,5-DIOXO-2,3,5,6,7,7A-HEXAHYDRO-1H-INDENE-CARBOXYL-COA HYDROLASE"/>
    <property type="match status" value="1"/>
</dbReference>
<dbReference type="PANTHER" id="PTHR11941">
    <property type="entry name" value="ENOYL-COA HYDRATASE-RELATED"/>
    <property type="match status" value="1"/>
</dbReference>
<dbReference type="Pfam" id="PF00378">
    <property type="entry name" value="ECH_1"/>
    <property type="match status" value="1"/>
</dbReference>
<dbReference type="SUPFAM" id="SSF52096">
    <property type="entry name" value="ClpP/crotonase"/>
    <property type="match status" value="1"/>
</dbReference>
<dbReference type="PROSITE" id="PS00166">
    <property type="entry name" value="ENOYL_COA_HYDRATASE"/>
    <property type="match status" value="1"/>
</dbReference>
<proteinExistence type="inferred from homology"/>
<organism>
    <name type="scientific">Mycobacterium bovis (strain ATCC BAA-935 / AF2122/97)</name>
    <dbReference type="NCBI Taxonomy" id="233413"/>
    <lineage>
        <taxon>Bacteria</taxon>
        <taxon>Bacillati</taxon>
        <taxon>Actinomycetota</taxon>
        <taxon>Actinomycetes</taxon>
        <taxon>Mycobacteriales</taxon>
        <taxon>Mycobacteriaceae</taxon>
        <taxon>Mycobacterium</taxon>
        <taxon>Mycobacterium tuberculosis complex</taxon>
    </lineage>
</organism>
<feature type="chain" id="PRO_0000109333" description="Probable enoyl-CoA hydratase echA6">
    <location>
        <begin position="1"/>
        <end position="243"/>
    </location>
</feature>
<comment type="function">
    <text evidence="1">Could possibly oxidize fatty acids using specific components.</text>
</comment>
<comment type="catalytic activity">
    <reaction>
        <text>a (3S)-3-hydroxyacyl-CoA = a (2E)-enoyl-CoA + H2O</text>
        <dbReference type="Rhea" id="RHEA:16105"/>
        <dbReference type="ChEBI" id="CHEBI:15377"/>
        <dbReference type="ChEBI" id="CHEBI:57318"/>
        <dbReference type="ChEBI" id="CHEBI:58856"/>
        <dbReference type="EC" id="4.2.1.17"/>
    </reaction>
</comment>
<comment type="catalytic activity">
    <reaction>
        <text>a 4-saturated-(3S)-3-hydroxyacyl-CoA = a (3E)-enoyl-CoA + H2O</text>
        <dbReference type="Rhea" id="RHEA:20724"/>
        <dbReference type="ChEBI" id="CHEBI:15377"/>
        <dbReference type="ChEBI" id="CHEBI:58521"/>
        <dbReference type="ChEBI" id="CHEBI:137480"/>
        <dbReference type="EC" id="4.2.1.17"/>
    </reaction>
</comment>
<comment type="similarity">
    <text evidence="2">Belongs to the enoyl-CoA hydratase/isomerase family.</text>
</comment>